<geneLocation type="chloroplast"/>
<accession>A6YG99</accession>
<comment type="function">
    <text evidence="1">One of the components of the core complex of photosystem II (PSII), required for its stability and/or assembly. PSII is a light-driven water:plastoquinone oxidoreductase that uses light energy to abstract electrons from H(2)O, generating O(2) and a proton gradient subsequently used for ATP formation. It consists of a core antenna complex that captures photons, and an electron transfer chain that converts photonic excitation into a charge separation.</text>
</comment>
<comment type="subunit">
    <text evidence="1">PSII is composed of 1 copy each of membrane proteins PsbA, PsbB, PsbC, PsbD, PsbE, PsbF, PsbH, PsbI, PsbJ, PsbK, PsbL, PsbM, PsbT, PsbX, PsbY, PsbZ, Psb30/Ycf12, at least 3 peripheral proteins of the oxygen-evolving complex and a large number of cofactors. It forms dimeric complexes.</text>
</comment>
<comment type="subcellular location">
    <subcellularLocation>
        <location evidence="1">Plastid</location>
        <location evidence="1">Chloroplast thylakoid membrane</location>
        <topology evidence="1">Single-pass membrane protein</topology>
    </subcellularLocation>
</comment>
<comment type="similarity">
    <text evidence="1">Belongs to the PsbI family.</text>
</comment>
<feature type="chain" id="PRO_0000353236" description="Photosystem II reaction center protein I">
    <location>
        <begin position="1"/>
        <end position="34"/>
    </location>
</feature>
<feature type="transmembrane region" description="Helical" evidence="1">
    <location>
        <begin position="4"/>
        <end position="24"/>
    </location>
</feature>
<reference key="1">
    <citation type="journal article" date="2007" name="BMC Genomics">
        <title>The chloroplast genome sequence of the green alga Leptosira terrestris: multiple losses of the inverted repeat and extensive genome rearrangements within the Trebouxiophyceae.</title>
        <authorList>
            <person name="de Cambiaire J.-C."/>
            <person name="Otis C."/>
            <person name="Turmel M."/>
            <person name="Lemieux C."/>
        </authorList>
    </citation>
    <scope>NUCLEOTIDE SEQUENCE [LARGE SCALE GENOMIC DNA]</scope>
    <source>
        <strain>CCAP 463/2 / UTEX 333</strain>
    </source>
</reference>
<name>PSBI_PLETE</name>
<dbReference type="EMBL" id="EF506945">
    <property type="protein sequence ID" value="ABO69315.1"/>
    <property type="molecule type" value="Genomic_DNA"/>
</dbReference>
<dbReference type="RefSeq" id="YP_001382176.1">
    <property type="nucleotide sequence ID" value="NC_009681.1"/>
</dbReference>
<dbReference type="SMR" id="A6YG99"/>
<dbReference type="GeneID" id="5383786"/>
<dbReference type="GO" id="GO:0009535">
    <property type="term" value="C:chloroplast thylakoid membrane"/>
    <property type="evidence" value="ECO:0007669"/>
    <property type="project" value="UniProtKB-SubCell"/>
</dbReference>
<dbReference type="GO" id="GO:0009539">
    <property type="term" value="C:photosystem II reaction center"/>
    <property type="evidence" value="ECO:0007669"/>
    <property type="project" value="InterPro"/>
</dbReference>
<dbReference type="GO" id="GO:0015979">
    <property type="term" value="P:photosynthesis"/>
    <property type="evidence" value="ECO:0007669"/>
    <property type="project" value="UniProtKB-UniRule"/>
</dbReference>
<dbReference type="HAMAP" id="MF_01316">
    <property type="entry name" value="PSII_PsbI"/>
    <property type="match status" value="1"/>
</dbReference>
<dbReference type="InterPro" id="IPR003686">
    <property type="entry name" value="PSII_PsbI"/>
</dbReference>
<dbReference type="InterPro" id="IPR037271">
    <property type="entry name" value="PSII_PsbI_sf"/>
</dbReference>
<dbReference type="NCBIfam" id="NF002735">
    <property type="entry name" value="PRK02655.1"/>
    <property type="match status" value="1"/>
</dbReference>
<dbReference type="PANTHER" id="PTHR35772">
    <property type="entry name" value="PHOTOSYSTEM II REACTION CENTER PROTEIN I"/>
    <property type="match status" value="1"/>
</dbReference>
<dbReference type="PANTHER" id="PTHR35772:SF1">
    <property type="entry name" value="PHOTOSYSTEM II REACTION CENTER PROTEIN I"/>
    <property type="match status" value="1"/>
</dbReference>
<dbReference type="Pfam" id="PF02532">
    <property type="entry name" value="PsbI"/>
    <property type="match status" value="1"/>
</dbReference>
<dbReference type="SUPFAM" id="SSF161041">
    <property type="entry name" value="Photosystem II reaction center protein I, PsbI"/>
    <property type="match status" value="1"/>
</dbReference>
<proteinExistence type="inferred from homology"/>
<keyword id="KW-0150">Chloroplast</keyword>
<keyword id="KW-0472">Membrane</keyword>
<keyword id="KW-0602">Photosynthesis</keyword>
<keyword id="KW-0604">Photosystem II</keyword>
<keyword id="KW-0934">Plastid</keyword>
<keyword id="KW-0674">Reaction center</keyword>
<keyword id="KW-0793">Thylakoid</keyword>
<keyword id="KW-0812">Transmembrane</keyword>
<keyword id="KW-1133">Transmembrane helix</keyword>
<evidence type="ECO:0000255" key="1">
    <source>
        <dbReference type="HAMAP-Rule" id="MF_01316"/>
    </source>
</evidence>
<gene>
    <name evidence="1" type="primary">psbI</name>
</gene>
<organism>
    <name type="scientific">Pleurastrum terricola</name>
    <name type="common">Filamentous green alga</name>
    <name type="synonym">Leptosira terrestris</name>
    <dbReference type="NCBI Taxonomy" id="34116"/>
    <lineage>
        <taxon>Eukaryota</taxon>
        <taxon>Viridiplantae</taxon>
        <taxon>Chlorophyta</taxon>
        <taxon>core chlorophytes</taxon>
        <taxon>Chlorophyceae</taxon>
        <taxon>CS clade</taxon>
        <taxon>Chlamydomonadales</taxon>
        <taxon>Pleurastraceae</taxon>
        <taxon>Pleurastrum</taxon>
    </lineage>
</organism>
<protein>
    <recommendedName>
        <fullName evidence="1">Photosystem II reaction center protein I</fullName>
        <shortName evidence="1">PSII-I</shortName>
    </recommendedName>
    <alternativeName>
        <fullName evidence="1">PSII 4.8 kDa protein</fullName>
    </alternativeName>
</protein>
<sequence>MLTLKIFVYTVVTFFVSLFVFGFLSNDPGRNPSR</sequence>